<feature type="chain" id="PRO_0000462109" description="U6 snRNA (guanine-N(2))-methyltransferase THUMPD2">
    <location>
        <begin position="1"/>
        <end position="501"/>
    </location>
</feature>
<feature type="domain" description="THUMP" evidence="2">
    <location>
        <begin position="149"/>
        <end position="264"/>
    </location>
</feature>
<feature type="region of interest" description="Disordered" evidence="3">
    <location>
        <begin position="414"/>
        <end position="469"/>
    </location>
</feature>
<feature type="compositionally biased region" description="Basic and acidic residues" evidence="3">
    <location>
        <begin position="430"/>
        <end position="442"/>
    </location>
</feature>
<evidence type="ECO:0000250" key="1">
    <source>
        <dbReference type="UniProtKB" id="Q9BTF0"/>
    </source>
</evidence>
<evidence type="ECO:0000255" key="2">
    <source>
        <dbReference type="PROSITE-ProRule" id="PRU00529"/>
    </source>
</evidence>
<evidence type="ECO:0000256" key="3">
    <source>
        <dbReference type="SAM" id="MobiDB-lite"/>
    </source>
</evidence>
<evidence type="ECO:0000269" key="4">
    <source>
    </source>
</evidence>
<evidence type="ECO:0000305" key="5"/>
<evidence type="ECO:0000305" key="6">
    <source>
    </source>
</evidence>
<evidence type="ECO:0000312" key="7">
    <source>
        <dbReference type="VGNC" id="VGNC:35854"/>
    </source>
</evidence>
<name>THUM2_BOVIN</name>
<reference key="1">
    <citation type="submission" date="2018-03" db="EMBL/GenBank/DDBJ databases">
        <title>ARS-UCD1.2.</title>
        <authorList>
            <person name="Rosen B.D."/>
            <person name="Bickhart D.M."/>
            <person name="Koren S."/>
            <person name="Schnabel R.D."/>
            <person name="Hall R."/>
            <person name="Zimin A."/>
            <person name="Dreischer C."/>
            <person name="Schultheiss S."/>
            <person name="Schroeder S.G."/>
            <person name="Elsik C.G."/>
            <person name="Couldrey C."/>
            <person name="Liu G.E."/>
            <person name="Van Tassell C.P."/>
            <person name="Phillippy A.M."/>
            <person name="Smith T.P.L."/>
            <person name="Medrano J.F."/>
        </authorList>
    </citation>
    <scope>NUCLEOTIDE SEQUENCE [LARGE SCALE GENOMIC DNA]</scope>
    <source>
        <strain>Hereford</strain>
    </source>
</reference>
<reference key="2">
    <citation type="journal article" date="2023" name="Nucleic Acids Res.">
        <title>N 2-methylguanosine modifications on human tRNAs and snRNA U6 are important for cell proliferation, protein translation and pre-mRNA splicing.</title>
        <authorList>
            <person name="Wang C."/>
            <person name="Ulryck N."/>
            <person name="Herzel L."/>
            <person name="Pythoud N."/>
            <person name="Kleiber N."/>
            <person name="Guerineau V."/>
            <person name="Jactel V."/>
            <person name="Moritz C."/>
            <person name="Bohnsack M.T."/>
            <person name="Carapito C."/>
            <person name="Touboul D."/>
            <person name="Bohnsack K.E."/>
            <person name="Graille M."/>
        </authorList>
    </citation>
    <scope>FUNCTION</scope>
    <scope>CATALYTIC ACTIVITY</scope>
    <scope>IDENTIFICATION IN THE THUMPD2-TRM112 METHYLTRANSFERASE COMPLEX</scope>
</reference>
<accession>E1B8U2</accession>
<gene>
    <name evidence="7" type="primary">THUMPD2</name>
</gene>
<organism>
    <name type="scientific">Bos taurus</name>
    <name type="common">Bovine</name>
    <dbReference type="NCBI Taxonomy" id="9913"/>
    <lineage>
        <taxon>Eukaryota</taxon>
        <taxon>Metazoa</taxon>
        <taxon>Chordata</taxon>
        <taxon>Craniata</taxon>
        <taxon>Vertebrata</taxon>
        <taxon>Euteleostomi</taxon>
        <taxon>Mammalia</taxon>
        <taxon>Eutheria</taxon>
        <taxon>Laurasiatheria</taxon>
        <taxon>Artiodactyla</taxon>
        <taxon>Ruminantia</taxon>
        <taxon>Pecora</taxon>
        <taxon>Bovidae</taxon>
        <taxon>Bovinae</taxon>
        <taxon>Bos</taxon>
    </lineage>
</organism>
<sequence>MAVVPGGPSSRPAVGAQFFCTAGRGLEPFLMREVRERLAATQVEYISGKVFFTTCSDLNMLKQLKSAERLFLLIKKQLPFPVSSVSKGKILNELQRLINDDPESWLNAISIWKNLLELDAKKEKLSHKNANPLKRKVGEDDITAKKLKTEQIQELQETKECQLEKQIEEKILEQGNFITEGEKFQKLQDDVTEAVDTRNQTNLTFRVSCRCSGAVAKTLTAQEVGRVIGIALMKQFGWKADLRNPNLEIFIHLSDVYSVLGIPVFRVPLACRAYIKTAGLRSTIAWAMASLAEIKAGAVVLDPMCGLGTILLEAAKEWPHVYYVGADVSDSQLSGAYDNLRAAGLRDKIELLQVSVIELPLPSESVDIIISDIPFGKKFKLGKDIKRMLQEMERVLRVGGTIVLLLSEDHHRHLKGGEASSGPLNSQGGHTEEPGGEERLTPAEKAAVSEPVSSPFAASNQGRLDRMPPLGSLVPVDCYRVSLGKTDALISKYKKSHSPGR</sequence>
<protein>
    <recommendedName>
        <fullName evidence="6">U6 snRNA (guanine-N(2))-methyltransferase THUMPD2</fullName>
        <ecNumber evidence="4">2.1.1.-</ecNumber>
    </recommendedName>
    <alternativeName>
        <fullName evidence="7">THUMP domain-containing protein 2</fullName>
    </alternativeName>
</protein>
<proteinExistence type="evidence at protein level"/>
<comment type="function">
    <text evidence="1 4">Catalytic subunit of the THUMPD2-TRM112 methyltransferase complex, that specifically mediates the S-adenosyl-L-methionine-dependent N(2)-methylation of guanosine nucleotides, most probably at position 72 (m2G72), in the U6snRNA of the major spliceosome (PubMed:37283053). This modification in the U6 snRNA affects the constitutive splicing efficiency of introns that have suboptimal splice sites and can impact final mRNA levels (By similarity).</text>
</comment>
<comment type="catalytic activity">
    <reaction evidence="1">
        <text>guanosine in U6 snRNA + S-adenosyl-L-methionine = N(2)-methylguanosine in U6 snRNA + S-adenosyl-L-homocysteine + H(+)</text>
        <dbReference type="Rhea" id="RHEA:83423"/>
        <dbReference type="Rhea" id="RHEA-COMP:20128"/>
        <dbReference type="Rhea" id="RHEA-COMP:20129"/>
        <dbReference type="ChEBI" id="CHEBI:15378"/>
        <dbReference type="ChEBI" id="CHEBI:57856"/>
        <dbReference type="ChEBI" id="CHEBI:59789"/>
        <dbReference type="ChEBI" id="CHEBI:74269"/>
        <dbReference type="ChEBI" id="CHEBI:74481"/>
    </reaction>
    <physiologicalReaction direction="left-to-right" evidence="1">
        <dbReference type="Rhea" id="RHEA:83424"/>
    </physiologicalReaction>
</comment>
<comment type="subunit">
    <text evidence="4">Part of the heterodimeric THUMPD2-TRM112 methyltransferase complex; this complex forms an active tRNA methyltransferase, where TRMT112 acts as an activator of the catalytic subunit THUMPD2.</text>
</comment>
<comment type="subcellular location">
    <subcellularLocation>
        <location evidence="1">Nucleus</location>
    </subcellularLocation>
</comment>
<comment type="similarity">
    <text evidence="5">Belongs to the methyltransferase superfamily.</text>
</comment>
<keyword id="KW-0489">Methyltransferase</keyword>
<keyword id="KW-0539">Nucleus</keyword>
<keyword id="KW-1185">Reference proteome</keyword>
<keyword id="KW-0694">RNA-binding</keyword>
<keyword id="KW-0808">Transferase</keyword>
<dbReference type="EC" id="2.1.1.-" evidence="4"/>
<dbReference type="EMBL" id="NKLS02000011">
    <property type="status" value="NOT_ANNOTATED_CDS"/>
    <property type="molecule type" value="Genomic_DNA"/>
</dbReference>
<dbReference type="RefSeq" id="NP_001179151.2">
    <property type="nucleotide sequence ID" value="NM_001192222.3"/>
</dbReference>
<dbReference type="FunCoup" id="E1B8U2">
    <property type="interactions" value="2057"/>
</dbReference>
<dbReference type="STRING" id="9913.ENSBTAP00000006195"/>
<dbReference type="PaxDb" id="9913-ENSBTAP00000006195"/>
<dbReference type="Ensembl" id="ENSBTAT00000006195.6">
    <property type="protein sequence ID" value="ENSBTAP00000006195.6"/>
    <property type="gene ID" value="ENSBTAG00000004722.7"/>
</dbReference>
<dbReference type="GeneID" id="509460"/>
<dbReference type="VEuPathDB" id="HostDB:ENSBTAG00000004722"/>
<dbReference type="VGNC" id="VGNC:35854">
    <property type="gene designation" value="THUMPD2"/>
</dbReference>
<dbReference type="eggNOG" id="ENOG502QSR4">
    <property type="taxonomic scope" value="Eukaryota"/>
</dbReference>
<dbReference type="GeneTree" id="ENSGT00530000063557"/>
<dbReference type="HOGENOM" id="CLU_045692_1_0_1"/>
<dbReference type="InParanoid" id="E1B8U2"/>
<dbReference type="OMA" id="QWTSAVM"/>
<dbReference type="TreeFam" id="TF313093"/>
<dbReference type="Proteomes" id="UP000009136">
    <property type="component" value="Chromosome 11"/>
</dbReference>
<dbReference type="Bgee" id="ENSBTAG00000004722">
    <property type="expression patterns" value="Expressed in urethra and 107 other cell types or tissues"/>
</dbReference>
<dbReference type="GO" id="GO:0005634">
    <property type="term" value="C:nucleus"/>
    <property type="evidence" value="ECO:0000250"/>
    <property type="project" value="UniProtKB"/>
</dbReference>
<dbReference type="GO" id="GO:0043527">
    <property type="term" value="C:tRNA methyltransferase complex"/>
    <property type="evidence" value="ECO:0000314"/>
    <property type="project" value="UniProtKB"/>
</dbReference>
<dbReference type="GO" id="GO:0003723">
    <property type="term" value="F:RNA binding"/>
    <property type="evidence" value="ECO:0007669"/>
    <property type="project" value="UniProtKB-UniRule"/>
</dbReference>
<dbReference type="GO" id="GO:0106346">
    <property type="term" value="F:snRNA methyltransferase activity"/>
    <property type="evidence" value="ECO:0000314"/>
    <property type="project" value="UniProtKB"/>
</dbReference>
<dbReference type="GO" id="GO:0016423">
    <property type="term" value="F:tRNA (guanine) methyltransferase activity"/>
    <property type="evidence" value="ECO:0000318"/>
    <property type="project" value="GO_Central"/>
</dbReference>
<dbReference type="GO" id="GO:0160230">
    <property type="term" value="F:U6 snRNA (guanine-N(2))-methyltransferase activity"/>
    <property type="evidence" value="ECO:0007669"/>
    <property type="project" value="Ensembl"/>
</dbReference>
<dbReference type="GO" id="GO:0000381">
    <property type="term" value="P:regulation of alternative mRNA splicing, via spliceosome"/>
    <property type="evidence" value="ECO:0000250"/>
    <property type="project" value="UniProtKB"/>
</dbReference>
<dbReference type="GO" id="GO:0030488">
    <property type="term" value="P:tRNA methylation"/>
    <property type="evidence" value="ECO:0000318"/>
    <property type="project" value="GO_Central"/>
</dbReference>
<dbReference type="CDD" id="cd02440">
    <property type="entry name" value="AdoMet_MTases"/>
    <property type="match status" value="1"/>
</dbReference>
<dbReference type="CDD" id="cd11715">
    <property type="entry name" value="THUMP_AdoMetMT"/>
    <property type="match status" value="1"/>
</dbReference>
<dbReference type="FunFam" id="3.30.2130.30:FF:000005">
    <property type="entry name" value="THUMP domain containing 2, isoform CRA_b"/>
    <property type="match status" value="1"/>
</dbReference>
<dbReference type="FunFam" id="3.40.50.150:FF:000177">
    <property type="entry name" value="THUMP domain containing 2, isoform CRA_b"/>
    <property type="match status" value="1"/>
</dbReference>
<dbReference type="Gene3D" id="3.30.2130.30">
    <property type="match status" value="1"/>
</dbReference>
<dbReference type="Gene3D" id="3.40.50.150">
    <property type="entry name" value="Vaccinia Virus protein VP39"/>
    <property type="match status" value="1"/>
</dbReference>
<dbReference type="InterPro" id="IPR000241">
    <property type="entry name" value="RlmKL-like_Mtase"/>
</dbReference>
<dbReference type="InterPro" id="IPR029063">
    <property type="entry name" value="SAM-dependent_MTases_sf"/>
</dbReference>
<dbReference type="InterPro" id="IPR004114">
    <property type="entry name" value="THUMP_dom"/>
</dbReference>
<dbReference type="PANTHER" id="PTHR14911">
    <property type="entry name" value="THUMP DOMAIN-CONTAINING"/>
    <property type="match status" value="1"/>
</dbReference>
<dbReference type="PANTHER" id="PTHR14911:SF1">
    <property type="entry name" value="THUMP DOMAIN-CONTAINING PROTEIN 2"/>
    <property type="match status" value="1"/>
</dbReference>
<dbReference type="Pfam" id="PF02926">
    <property type="entry name" value="THUMP"/>
    <property type="match status" value="1"/>
</dbReference>
<dbReference type="Pfam" id="PF01170">
    <property type="entry name" value="UPF0020"/>
    <property type="match status" value="1"/>
</dbReference>
<dbReference type="SMART" id="SM00981">
    <property type="entry name" value="THUMP"/>
    <property type="match status" value="1"/>
</dbReference>
<dbReference type="SUPFAM" id="SSF53335">
    <property type="entry name" value="S-adenosyl-L-methionine-dependent methyltransferases"/>
    <property type="match status" value="1"/>
</dbReference>
<dbReference type="SUPFAM" id="SSF143437">
    <property type="entry name" value="THUMP domain-like"/>
    <property type="match status" value="1"/>
</dbReference>
<dbReference type="PROSITE" id="PS51165">
    <property type="entry name" value="THUMP"/>
    <property type="match status" value="1"/>
</dbReference>